<keyword id="KW-1185">Reference proteome</keyword>
<organism>
    <name type="scientific">Mycoplasma pneumoniae (strain ATCC 29342 / M129 / Subtype 1)</name>
    <name type="common">Mycoplasmoides pneumoniae</name>
    <dbReference type="NCBI Taxonomy" id="272634"/>
    <lineage>
        <taxon>Bacteria</taxon>
        <taxon>Bacillati</taxon>
        <taxon>Mycoplasmatota</taxon>
        <taxon>Mycoplasmoidales</taxon>
        <taxon>Mycoplasmoidaceae</taxon>
        <taxon>Mycoplasmoides</taxon>
    </lineage>
</organism>
<accession>P75491</accession>
<protein>
    <recommendedName>
        <fullName>Putative adhesin P1-like protein MPN_286</fullName>
    </recommendedName>
</protein>
<reference key="1">
    <citation type="journal article" date="1996" name="Nucleic Acids Res.">
        <title>Complete sequence analysis of the genome of the bacterium Mycoplasma pneumoniae.</title>
        <authorList>
            <person name="Himmelreich R."/>
            <person name="Hilbert H."/>
            <person name="Plagens H."/>
            <person name="Pirkl E."/>
            <person name="Li B.-C."/>
            <person name="Herrmann R."/>
        </authorList>
    </citation>
    <scope>NUCLEOTIDE SEQUENCE [LARGE SCALE GENOMIC DNA]</scope>
    <source>
        <strain>ATCC 29342 / M129 / Subtype 1</strain>
    </source>
</reference>
<feature type="chain" id="PRO_0000210712" description="Putative adhesin P1-like protein MPN_286">
    <location>
        <begin position="1"/>
        <end position="465"/>
    </location>
</feature>
<feature type="region of interest" description="Disordered" evidence="1">
    <location>
        <begin position="9"/>
        <end position="48"/>
    </location>
</feature>
<feature type="region of interest" description="Disordered" evidence="1">
    <location>
        <begin position="59"/>
        <end position="78"/>
    </location>
</feature>
<feature type="region of interest" description="Disordered" evidence="1">
    <location>
        <begin position="93"/>
        <end position="167"/>
    </location>
</feature>
<feature type="compositionally biased region" description="Low complexity" evidence="1">
    <location>
        <begin position="21"/>
        <end position="37"/>
    </location>
</feature>
<feature type="compositionally biased region" description="Polar residues" evidence="1">
    <location>
        <begin position="38"/>
        <end position="48"/>
    </location>
</feature>
<feature type="compositionally biased region" description="Low complexity" evidence="1">
    <location>
        <begin position="111"/>
        <end position="131"/>
    </location>
</feature>
<feature type="compositionally biased region" description="Basic and acidic residues" evidence="1">
    <location>
        <begin position="135"/>
        <end position="144"/>
    </location>
</feature>
<feature type="compositionally biased region" description="Polar residues" evidence="1">
    <location>
        <begin position="145"/>
        <end position="156"/>
    </location>
</feature>
<feature type="compositionally biased region" description="Low complexity" evidence="1">
    <location>
        <begin position="157"/>
        <end position="167"/>
    </location>
</feature>
<comment type="similarity">
    <text evidence="2">Belongs to the adhesin P1 family.</text>
</comment>
<comment type="caution">
    <text evidence="2">Could be the product of a pseudogene.</text>
</comment>
<proteinExistence type="uncertain"/>
<sequence>MLDYIPWIGNGHRYGNDHRGSNSSTSGVTTQGQQSQNASGTEPASTFSNVGVGLKANVQGTLGGSQTTTTGKDIPKWPTLDQANLQLWTGAGWRNDKASSGQSDENHTKFTSATGSGQQGSSSGTTNSAGNPDSLKQDKVDKSGDSVTVAETTSGDNLTNYTNLPPNLTPTADWPNALSFTNKNNAQRAQLFLRALLGSIPVLVNKSGQDDSNKFQATDQKWSYTELKSDQTKLNLPAYGEVNGLLNPALVEVYGLSSTQGSSTGAGGAGGNTGGDTNTQTYARPGIGFKLPSTDSESSKATLITPGLAWTAQDVGNLVVSGTSLSFQLGGWLVTFTDFIKPRSGYLGLQLTGLDANDSDQRELIWAPPALNRLSWQLGQPLGPRGECVGFQGGVGGSSSVRLASSYKYHHRNEGYLIGAHQCFGLSGELYRPGFVQGFHSKLRPKPKHLPLPALGAGEKSRFLW</sequence>
<gene>
    <name type="ordered locus">MPN_286</name>
    <name type="ORF">A65_orf465V</name>
    <name type="ORF">MP549</name>
</gene>
<evidence type="ECO:0000256" key="1">
    <source>
        <dbReference type="SAM" id="MobiDB-lite"/>
    </source>
</evidence>
<evidence type="ECO:0000305" key="2"/>
<name>Y286_MYCPN</name>
<dbReference type="EMBL" id="U00089">
    <property type="protein sequence ID" value="AAB96197.1"/>
    <property type="molecule type" value="Genomic_DNA"/>
</dbReference>
<dbReference type="PIR" id="S73875">
    <property type="entry name" value="S73875"/>
</dbReference>
<dbReference type="RefSeq" id="NP_109974.1">
    <property type="nucleotide sequence ID" value="NC_000912.1"/>
</dbReference>
<dbReference type="SMR" id="P75491"/>
<dbReference type="EnsemblBacteria" id="AAB96197">
    <property type="protein sequence ID" value="AAB96197"/>
    <property type="gene ID" value="MPN_286"/>
</dbReference>
<dbReference type="KEGG" id="mpn:MPN_286"/>
<dbReference type="PATRIC" id="fig|272634.6.peg.308"/>
<dbReference type="HOGENOM" id="CLU_022417_1_0_14"/>
<dbReference type="OrthoDB" id="403686at2"/>
<dbReference type="BioCyc" id="MPNE272634:G1GJ3-450-MONOMER"/>
<dbReference type="Proteomes" id="UP000000808">
    <property type="component" value="Chromosome"/>
</dbReference>